<accession>Q2GD37</accession>
<keyword id="KW-0963">Cytoplasm</keyword>
<keyword id="KW-0324">Glycolysis</keyword>
<keyword id="KW-0456">Lyase</keyword>
<keyword id="KW-0460">Magnesium</keyword>
<keyword id="KW-0479">Metal-binding</keyword>
<keyword id="KW-0964">Secreted</keyword>
<proteinExistence type="inferred from homology"/>
<dbReference type="EC" id="4.2.1.11" evidence="1"/>
<dbReference type="EMBL" id="CP000237">
    <property type="protein sequence ID" value="ABD46044.1"/>
    <property type="molecule type" value="Genomic_DNA"/>
</dbReference>
<dbReference type="RefSeq" id="WP_011452115.1">
    <property type="nucleotide sequence ID" value="NC_007798.1"/>
</dbReference>
<dbReference type="SMR" id="Q2GD37"/>
<dbReference type="STRING" id="222891.NSE_0733"/>
<dbReference type="KEGG" id="nse:NSE_0733"/>
<dbReference type="eggNOG" id="COG0148">
    <property type="taxonomic scope" value="Bacteria"/>
</dbReference>
<dbReference type="HOGENOM" id="CLU_031223_2_1_5"/>
<dbReference type="OrthoDB" id="9804716at2"/>
<dbReference type="UniPathway" id="UPA00109">
    <property type="reaction ID" value="UER00187"/>
</dbReference>
<dbReference type="Proteomes" id="UP000001942">
    <property type="component" value="Chromosome"/>
</dbReference>
<dbReference type="GO" id="GO:0009986">
    <property type="term" value="C:cell surface"/>
    <property type="evidence" value="ECO:0007669"/>
    <property type="project" value="UniProtKB-SubCell"/>
</dbReference>
<dbReference type="GO" id="GO:0005576">
    <property type="term" value="C:extracellular region"/>
    <property type="evidence" value="ECO:0007669"/>
    <property type="project" value="UniProtKB-SubCell"/>
</dbReference>
<dbReference type="GO" id="GO:0000015">
    <property type="term" value="C:phosphopyruvate hydratase complex"/>
    <property type="evidence" value="ECO:0007669"/>
    <property type="project" value="InterPro"/>
</dbReference>
<dbReference type="GO" id="GO:0000287">
    <property type="term" value="F:magnesium ion binding"/>
    <property type="evidence" value="ECO:0007669"/>
    <property type="project" value="UniProtKB-UniRule"/>
</dbReference>
<dbReference type="GO" id="GO:0004634">
    <property type="term" value="F:phosphopyruvate hydratase activity"/>
    <property type="evidence" value="ECO:0007669"/>
    <property type="project" value="UniProtKB-UniRule"/>
</dbReference>
<dbReference type="GO" id="GO:0006096">
    <property type="term" value="P:glycolytic process"/>
    <property type="evidence" value="ECO:0007669"/>
    <property type="project" value="UniProtKB-UniRule"/>
</dbReference>
<dbReference type="CDD" id="cd03313">
    <property type="entry name" value="enolase"/>
    <property type="match status" value="1"/>
</dbReference>
<dbReference type="Gene3D" id="3.20.20.120">
    <property type="entry name" value="Enolase-like C-terminal domain"/>
    <property type="match status" value="1"/>
</dbReference>
<dbReference type="Gene3D" id="3.30.390.10">
    <property type="entry name" value="Enolase-like, N-terminal domain"/>
    <property type="match status" value="1"/>
</dbReference>
<dbReference type="HAMAP" id="MF_00318">
    <property type="entry name" value="Enolase"/>
    <property type="match status" value="1"/>
</dbReference>
<dbReference type="InterPro" id="IPR000941">
    <property type="entry name" value="Enolase"/>
</dbReference>
<dbReference type="InterPro" id="IPR036849">
    <property type="entry name" value="Enolase-like_C_sf"/>
</dbReference>
<dbReference type="InterPro" id="IPR029017">
    <property type="entry name" value="Enolase-like_N"/>
</dbReference>
<dbReference type="InterPro" id="IPR020810">
    <property type="entry name" value="Enolase_C"/>
</dbReference>
<dbReference type="InterPro" id="IPR020809">
    <property type="entry name" value="Enolase_CS"/>
</dbReference>
<dbReference type="InterPro" id="IPR020811">
    <property type="entry name" value="Enolase_N"/>
</dbReference>
<dbReference type="NCBIfam" id="TIGR01060">
    <property type="entry name" value="eno"/>
    <property type="match status" value="1"/>
</dbReference>
<dbReference type="PANTHER" id="PTHR11902">
    <property type="entry name" value="ENOLASE"/>
    <property type="match status" value="1"/>
</dbReference>
<dbReference type="PANTHER" id="PTHR11902:SF1">
    <property type="entry name" value="ENOLASE"/>
    <property type="match status" value="1"/>
</dbReference>
<dbReference type="Pfam" id="PF00113">
    <property type="entry name" value="Enolase_C"/>
    <property type="match status" value="1"/>
</dbReference>
<dbReference type="Pfam" id="PF03952">
    <property type="entry name" value="Enolase_N"/>
    <property type="match status" value="1"/>
</dbReference>
<dbReference type="PIRSF" id="PIRSF001400">
    <property type="entry name" value="Enolase"/>
    <property type="match status" value="1"/>
</dbReference>
<dbReference type="PRINTS" id="PR00148">
    <property type="entry name" value="ENOLASE"/>
</dbReference>
<dbReference type="SFLD" id="SFLDF00002">
    <property type="entry name" value="enolase"/>
    <property type="match status" value="1"/>
</dbReference>
<dbReference type="SFLD" id="SFLDG00178">
    <property type="entry name" value="enolase"/>
    <property type="match status" value="1"/>
</dbReference>
<dbReference type="SMART" id="SM01192">
    <property type="entry name" value="Enolase_C"/>
    <property type="match status" value="1"/>
</dbReference>
<dbReference type="SMART" id="SM01193">
    <property type="entry name" value="Enolase_N"/>
    <property type="match status" value="1"/>
</dbReference>
<dbReference type="SUPFAM" id="SSF51604">
    <property type="entry name" value="Enolase C-terminal domain-like"/>
    <property type="match status" value="1"/>
</dbReference>
<dbReference type="SUPFAM" id="SSF54826">
    <property type="entry name" value="Enolase N-terminal domain-like"/>
    <property type="match status" value="1"/>
</dbReference>
<dbReference type="PROSITE" id="PS00164">
    <property type="entry name" value="ENOLASE"/>
    <property type="match status" value="1"/>
</dbReference>
<gene>
    <name evidence="1" type="primary">eno</name>
    <name type="ordered locus">NSE_0733</name>
</gene>
<comment type="function">
    <text evidence="1">Catalyzes the reversible conversion of 2-phosphoglycerate (2-PG) into phosphoenolpyruvate (PEP). It is essential for the degradation of carbohydrates via glycolysis.</text>
</comment>
<comment type="catalytic activity">
    <reaction evidence="1">
        <text>(2R)-2-phosphoglycerate = phosphoenolpyruvate + H2O</text>
        <dbReference type="Rhea" id="RHEA:10164"/>
        <dbReference type="ChEBI" id="CHEBI:15377"/>
        <dbReference type="ChEBI" id="CHEBI:58289"/>
        <dbReference type="ChEBI" id="CHEBI:58702"/>
        <dbReference type="EC" id="4.2.1.11"/>
    </reaction>
</comment>
<comment type="cofactor">
    <cofactor evidence="1">
        <name>Mg(2+)</name>
        <dbReference type="ChEBI" id="CHEBI:18420"/>
    </cofactor>
    <text evidence="1">Binds a second Mg(2+) ion via substrate during catalysis.</text>
</comment>
<comment type="pathway">
    <text evidence="1">Carbohydrate degradation; glycolysis; pyruvate from D-glyceraldehyde 3-phosphate: step 4/5.</text>
</comment>
<comment type="subcellular location">
    <subcellularLocation>
        <location evidence="1">Cytoplasm</location>
    </subcellularLocation>
    <subcellularLocation>
        <location evidence="1">Secreted</location>
    </subcellularLocation>
    <subcellularLocation>
        <location evidence="1">Cell surface</location>
    </subcellularLocation>
    <text evidence="1">Fractions of enolase are present in both the cytoplasm and on the cell surface.</text>
</comment>
<comment type="similarity">
    <text evidence="1">Belongs to the enolase family.</text>
</comment>
<name>ENO_NEOSM</name>
<protein>
    <recommendedName>
        <fullName evidence="1">Enolase</fullName>
        <ecNumber evidence="1">4.2.1.11</ecNumber>
    </recommendedName>
    <alternativeName>
        <fullName evidence="1">2-phospho-D-glycerate hydro-lyase</fullName>
    </alternativeName>
    <alternativeName>
        <fullName evidence="1">2-phosphoglycerate dehydratase</fullName>
    </alternativeName>
</protein>
<evidence type="ECO:0000255" key="1">
    <source>
        <dbReference type="HAMAP-Rule" id="MF_00318"/>
    </source>
</evidence>
<reference key="1">
    <citation type="journal article" date="2006" name="PLoS Genet.">
        <title>Comparative genomics of emerging human ehrlichiosis agents.</title>
        <authorList>
            <person name="Dunning Hotopp J.C."/>
            <person name="Lin M."/>
            <person name="Madupu R."/>
            <person name="Crabtree J."/>
            <person name="Angiuoli S.V."/>
            <person name="Eisen J.A."/>
            <person name="Seshadri R."/>
            <person name="Ren Q."/>
            <person name="Wu M."/>
            <person name="Utterback T.R."/>
            <person name="Smith S."/>
            <person name="Lewis M."/>
            <person name="Khouri H."/>
            <person name="Zhang C."/>
            <person name="Niu H."/>
            <person name="Lin Q."/>
            <person name="Ohashi N."/>
            <person name="Zhi N."/>
            <person name="Nelson W.C."/>
            <person name="Brinkac L.M."/>
            <person name="Dodson R.J."/>
            <person name="Rosovitz M.J."/>
            <person name="Sundaram J.P."/>
            <person name="Daugherty S.C."/>
            <person name="Davidsen T."/>
            <person name="Durkin A.S."/>
            <person name="Gwinn M.L."/>
            <person name="Haft D.H."/>
            <person name="Selengut J.D."/>
            <person name="Sullivan S.A."/>
            <person name="Zafar N."/>
            <person name="Zhou L."/>
            <person name="Benahmed F."/>
            <person name="Forberger H."/>
            <person name="Halpin R."/>
            <person name="Mulligan S."/>
            <person name="Robinson J."/>
            <person name="White O."/>
            <person name="Rikihisa Y."/>
            <person name="Tettelin H."/>
        </authorList>
    </citation>
    <scope>NUCLEOTIDE SEQUENCE [LARGE SCALE GENOMIC DNA]</scope>
    <source>
        <strain>ATCC VR-367 / Miyayama</strain>
    </source>
</reference>
<feature type="chain" id="PRO_0000267062" description="Enolase">
    <location>
        <begin position="1"/>
        <end position="413"/>
    </location>
</feature>
<feature type="active site" description="Proton donor" evidence="1">
    <location>
        <position position="212"/>
    </location>
</feature>
<feature type="active site" description="Proton acceptor" evidence="1">
    <location>
        <position position="338"/>
    </location>
</feature>
<feature type="binding site" evidence="1">
    <location>
        <position position="170"/>
    </location>
    <ligand>
        <name>(2R)-2-phosphoglycerate</name>
        <dbReference type="ChEBI" id="CHEBI:58289"/>
    </ligand>
</feature>
<feature type="binding site" evidence="1">
    <location>
        <position position="245"/>
    </location>
    <ligand>
        <name>Mg(2+)</name>
        <dbReference type="ChEBI" id="CHEBI:18420"/>
    </ligand>
</feature>
<feature type="binding site" evidence="1">
    <location>
        <position position="286"/>
    </location>
    <ligand>
        <name>Mg(2+)</name>
        <dbReference type="ChEBI" id="CHEBI:18420"/>
    </ligand>
</feature>
<feature type="binding site" evidence="1">
    <location>
        <position position="313"/>
    </location>
    <ligand>
        <name>Mg(2+)</name>
        <dbReference type="ChEBI" id="CHEBI:18420"/>
    </ligand>
</feature>
<feature type="binding site" evidence="1">
    <location>
        <position position="338"/>
    </location>
    <ligand>
        <name>(2R)-2-phosphoglycerate</name>
        <dbReference type="ChEBI" id="CHEBI:58289"/>
    </ligand>
</feature>
<feature type="binding site" evidence="1">
    <location>
        <position position="367"/>
    </location>
    <ligand>
        <name>(2R)-2-phosphoglycerate</name>
        <dbReference type="ChEBI" id="CHEBI:58289"/>
    </ligand>
</feature>
<feature type="binding site" evidence="1">
    <location>
        <position position="368"/>
    </location>
    <ligand>
        <name>(2R)-2-phosphoglycerate</name>
        <dbReference type="ChEBI" id="CHEBI:58289"/>
    </ligand>
</feature>
<feature type="binding site" evidence="1">
    <location>
        <position position="389"/>
    </location>
    <ligand>
        <name>(2R)-2-phosphoglycerate</name>
        <dbReference type="ChEBI" id="CHEBI:58289"/>
    </ligand>
</feature>
<sequence>MQQIQKVKAREIFNSRGWPTIEVEVTTSCGRVGCAIAPSGASKGVLEACELLDGDKARLSGRGVLRAVENVHTIIAPALMGKSVAAQAEIDSLLIQLDGTTNKSVLGANAIVAVSLAVAKANASVRGVPLCIVFHNLLTSEGDDFVYVPPVPMLNVINGGVHADNRLAIQEFMICPVGRRSFRESMEKAADVFHRLKGLLKQYGKSTNVGDEGGFAPDLSSTEETLGLLSEAIGDSKESVKIALDAASSTFYKDGKYSIDGKLLNVNEMVDFYAAIIEKYDIVSIEDPLYESDWESWQVMTRKLSDKIHIVGDDIFVTNPKIIKKGIKTGVANAVLVKINQVGTVTETIESIKLARKAGYKVVISHRSGETEDLSIAHLAVACGGAFLKAGSLSRSERVAKYNEVLRLEEVFV</sequence>
<organism>
    <name type="scientific">Neorickettsia sennetsu (strain ATCC VR-367 / Miyayama)</name>
    <name type="common">Ehrlichia sennetsu</name>
    <dbReference type="NCBI Taxonomy" id="222891"/>
    <lineage>
        <taxon>Bacteria</taxon>
        <taxon>Pseudomonadati</taxon>
        <taxon>Pseudomonadota</taxon>
        <taxon>Alphaproteobacteria</taxon>
        <taxon>Rickettsiales</taxon>
        <taxon>Anaplasmataceae</taxon>
        <taxon>Neorickettsia</taxon>
    </lineage>
</organism>